<sequence>MQNNNDILKAQSPAALAEEYIVKSIWQDVFPAGSNLPSERDLADKIGVTRTTLREVLQRLARDGWLTIQHGKPTKVNNIWDAAGPNIIETLIALDMQSAPLIIDNMLSLRSKMSESYIYEAVKNSPQKSTALFAELEQLQNTAQDYTEFDYQLFRQFTVVANKPFYRLIFNSLKGVYQRIGLLFFKEKKHRELTKQFYLEMQQICLEGNADAVVDCIRKHNLRSSTYWKAILERLPQNLSD</sequence>
<feature type="chain" id="PRO_1000045462" description="Fatty acid metabolism regulator protein">
    <location>
        <begin position="1"/>
        <end position="241"/>
    </location>
</feature>
<feature type="domain" description="HTH gntR-type" evidence="1">
    <location>
        <begin position="11"/>
        <end position="79"/>
    </location>
</feature>
<feature type="DNA-binding region" description="H-T-H motif" evidence="1">
    <location>
        <begin position="39"/>
        <end position="58"/>
    </location>
</feature>
<organism>
    <name type="scientific">Haemophilus influenzae (strain PittGG)</name>
    <dbReference type="NCBI Taxonomy" id="374931"/>
    <lineage>
        <taxon>Bacteria</taxon>
        <taxon>Pseudomonadati</taxon>
        <taxon>Pseudomonadota</taxon>
        <taxon>Gammaproteobacteria</taxon>
        <taxon>Pasteurellales</taxon>
        <taxon>Pasteurellaceae</taxon>
        <taxon>Haemophilus</taxon>
    </lineage>
</organism>
<evidence type="ECO:0000255" key="1">
    <source>
        <dbReference type="HAMAP-Rule" id="MF_00696"/>
    </source>
</evidence>
<name>FADR_HAEIG</name>
<reference key="1">
    <citation type="journal article" date="2007" name="Genome Biol.">
        <title>Characterization and modeling of the Haemophilus influenzae core and supragenomes based on the complete genomic sequences of Rd and 12 clinical nontypeable strains.</title>
        <authorList>
            <person name="Hogg J.S."/>
            <person name="Hu F.Z."/>
            <person name="Janto B."/>
            <person name="Boissy R."/>
            <person name="Hayes J."/>
            <person name="Keefe R."/>
            <person name="Post J.C."/>
            <person name="Ehrlich G.D."/>
        </authorList>
    </citation>
    <scope>NUCLEOTIDE SEQUENCE [LARGE SCALE GENOMIC DNA]</scope>
    <source>
        <strain>PittGG</strain>
    </source>
</reference>
<protein>
    <recommendedName>
        <fullName evidence="1">Fatty acid metabolism regulator protein</fullName>
    </recommendedName>
</protein>
<accession>A5UGT9</accession>
<dbReference type="EMBL" id="CP000672">
    <property type="protein sequence ID" value="ABQ99994.1"/>
    <property type="molecule type" value="Genomic_DNA"/>
</dbReference>
<dbReference type="SMR" id="A5UGT9"/>
<dbReference type="KEGG" id="hiq:CGSHiGG_05340"/>
<dbReference type="HOGENOM" id="CLU_017584_9_4_6"/>
<dbReference type="Proteomes" id="UP000001990">
    <property type="component" value="Chromosome"/>
</dbReference>
<dbReference type="GO" id="GO:0005737">
    <property type="term" value="C:cytoplasm"/>
    <property type="evidence" value="ECO:0007669"/>
    <property type="project" value="UniProtKB-SubCell"/>
</dbReference>
<dbReference type="GO" id="GO:0003677">
    <property type="term" value="F:DNA binding"/>
    <property type="evidence" value="ECO:0007669"/>
    <property type="project" value="UniProtKB-KW"/>
</dbReference>
<dbReference type="GO" id="GO:0003700">
    <property type="term" value="F:DNA-binding transcription factor activity"/>
    <property type="evidence" value="ECO:0007669"/>
    <property type="project" value="UniProtKB-UniRule"/>
</dbReference>
<dbReference type="GO" id="GO:0000062">
    <property type="term" value="F:fatty-acyl-CoA binding"/>
    <property type="evidence" value="ECO:0007669"/>
    <property type="project" value="InterPro"/>
</dbReference>
<dbReference type="GO" id="GO:0006631">
    <property type="term" value="P:fatty acid metabolic process"/>
    <property type="evidence" value="ECO:0007669"/>
    <property type="project" value="UniProtKB-KW"/>
</dbReference>
<dbReference type="GO" id="GO:0019217">
    <property type="term" value="P:regulation of fatty acid metabolic process"/>
    <property type="evidence" value="ECO:0007669"/>
    <property type="project" value="UniProtKB-UniRule"/>
</dbReference>
<dbReference type="CDD" id="cd07377">
    <property type="entry name" value="WHTH_GntR"/>
    <property type="match status" value="1"/>
</dbReference>
<dbReference type="Gene3D" id="1.20.120.530">
    <property type="entry name" value="GntR ligand-binding domain-like"/>
    <property type="match status" value="1"/>
</dbReference>
<dbReference type="Gene3D" id="1.10.10.10">
    <property type="entry name" value="Winged helix-like DNA-binding domain superfamily/Winged helix DNA-binding domain"/>
    <property type="match status" value="1"/>
</dbReference>
<dbReference type="HAMAP" id="MF_00696">
    <property type="entry name" value="HTH_FadR"/>
    <property type="match status" value="1"/>
</dbReference>
<dbReference type="InterPro" id="IPR014178">
    <property type="entry name" value="FA-response_TF_FadR"/>
</dbReference>
<dbReference type="InterPro" id="IPR028374">
    <property type="entry name" value="FadR_C"/>
</dbReference>
<dbReference type="InterPro" id="IPR008920">
    <property type="entry name" value="TF_FadR/GntR_C"/>
</dbReference>
<dbReference type="InterPro" id="IPR000524">
    <property type="entry name" value="Tscrpt_reg_HTH_GntR"/>
</dbReference>
<dbReference type="InterPro" id="IPR036388">
    <property type="entry name" value="WH-like_DNA-bd_sf"/>
</dbReference>
<dbReference type="InterPro" id="IPR036390">
    <property type="entry name" value="WH_DNA-bd_sf"/>
</dbReference>
<dbReference type="NCBIfam" id="TIGR02812">
    <property type="entry name" value="fadR_gamma"/>
    <property type="match status" value="1"/>
</dbReference>
<dbReference type="NCBIfam" id="NF003444">
    <property type="entry name" value="PRK04984.1"/>
    <property type="match status" value="1"/>
</dbReference>
<dbReference type="PANTHER" id="PTHR43537:SF52">
    <property type="entry name" value="FATTY ACID METABOLISM REGULATOR PROTEIN"/>
    <property type="match status" value="1"/>
</dbReference>
<dbReference type="PANTHER" id="PTHR43537">
    <property type="entry name" value="TRANSCRIPTIONAL REGULATOR, GNTR FAMILY"/>
    <property type="match status" value="1"/>
</dbReference>
<dbReference type="Pfam" id="PF07840">
    <property type="entry name" value="FadR_C"/>
    <property type="match status" value="1"/>
</dbReference>
<dbReference type="Pfam" id="PF00392">
    <property type="entry name" value="GntR"/>
    <property type="match status" value="1"/>
</dbReference>
<dbReference type="PRINTS" id="PR00035">
    <property type="entry name" value="HTHGNTR"/>
</dbReference>
<dbReference type="SMART" id="SM00345">
    <property type="entry name" value="HTH_GNTR"/>
    <property type="match status" value="1"/>
</dbReference>
<dbReference type="SUPFAM" id="SSF48008">
    <property type="entry name" value="GntR ligand-binding domain-like"/>
    <property type="match status" value="1"/>
</dbReference>
<dbReference type="SUPFAM" id="SSF46785">
    <property type="entry name" value="Winged helix' DNA-binding domain"/>
    <property type="match status" value="1"/>
</dbReference>
<dbReference type="PROSITE" id="PS50949">
    <property type="entry name" value="HTH_GNTR"/>
    <property type="match status" value="1"/>
</dbReference>
<gene>
    <name evidence="1" type="primary">fadR</name>
    <name type="ordered locus">CGSHiGG_05340</name>
</gene>
<keyword id="KW-0010">Activator</keyword>
<keyword id="KW-0963">Cytoplasm</keyword>
<keyword id="KW-0238">DNA-binding</keyword>
<keyword id="KW-0276">Fatty acid metabolism</keyword>
<keyword id="KW-0443">Lipid metabolism</keyword>
<keyword id="KW-0678">Repressor</keyword>
<keyword id="KW-0804">Transcription</keyword>
<keyword id="KW-0805">Transcription regulation</keyword>
<proteinExistence type="inferred from homology"/>
<comment type="function">
    <text evidence="1">Multifunctional regulator of fatty acid metabolism.</text>
</comment>
<comment type="subunit">
    <text evidence="1">Homodimer.</text>
</comment>
<comment type="subcellular location">
    <subcellularLocation>
        <location evidence="1">Cytoplasm</location>
    </subcellularLocation>
</comment>